<feature type="chain" id="PRO_0000046624" description="C-type lectin domain family 4 member F">
    <location>
        <begin position="1"/>
        <end position="550"/>
    </location>
</feature>
<feature type="topological domain" description="Cytoplasmic" evidence="1">
    <location>
        <begin position="1"/>
        <end position="42"/>
    </location>
</feature>
<feature type="transmembrane region" description="Helical; Signal-anchor for type II membrane protein" evidence="1">
    <location>
        <begin position="43"/>
        <end position="69"/>
    </location>
</feature>
<feature type="topological domain" description="Extracellular" evidence="1">
    <location>
        <begin position="70"/>
        <end position="550"/>
    </location>
</feature>
<feature type="domain" description="C-type lectin" evidence="2">
    <location>
        <begin position="438"/>
        <end position="538"/>
    </location>
</feature>
<feature type="glycosylation site" description="N-linked (GlcNAc...) asparagine" evidence="1">
    <location>
        <position position="87"/>
    </location>
</feature>
<feature type="glycosylation site" description="N-linked (GlcNAc...) asparagine" evidence="1">
    <location>
        <position position="93"/>
    </location>
</feature>
<feature type="glycosylation site" description="N-linked (GlcNAc...) asparagine" evidence="1">
    <location>
        <position position="115"/>
    </location>
</feature>
<feature type="glycosylation site" description="N-linked (GlcNAc...) asparagine" evidence="1">
    <location>
        <position position="132"/>
    </location>
</feature>
<feature type="glycosylation site" description="N-linked (GlcNAc...) asparagine" evidence="1">
    <location>
        <position position="209"/>
    </location>
</feature>
<feature type="glycosylation site" description="N-linked (GlcNAc...) asparagine" evidence="1">
    <location>
        <position position="255"/>
    </location>
</feature>
<feature type="disulfide bond" evidence="2">
    <location>
        <begin position="440"/>
        <end position="536"/>
    </location>
</feature>
<feature type="disulfide bond" evidence="2">
    <location>
        <begin position="516"/>
        <end position="528"/>
    </location>
</feature>
<comment type="function">
    <text>Receptor with an affinity for galactose and fucose. Could be involved in endocytosis.</text>
</comment>
<comment type="subcellular location">
    <subcellularLocation>
        <location>Membrane</location>
        <topology>Single-pass type II membrane protein</topology>
    </subcellularLocation>
</comment>
<comment type="tissue specificity">
    <text>Kupffer cells.</text>
</comment>
<comment type="online information" name="Functional Glycomics Gateway - Glycan Binding">
    <link uri="http://www.functionalglycomics.org/glycomics/GBPServlet?&amp;operationType=view&amp;cbpId=cbp_rat_Ctlect_367"/>
    <text>Kupffer cell receptor</text>
</comment>
<sequence>MKEAELNRDVAKFCTDNQCVILQPQGLGPKSAAPMAPRTLRHVQAIVALVVVTVFFSLLALFVVVLQPWRQKQNEDHPVKAGLHGGNYSGSDNCSQFVRRAEMQEAIQSLRASGNSSSCHKEIQTLKYQMDNVSSQVQLLGGHLEEANADIQQAKDVLKGTGALASETQALRSSLEVASADIHSLRGDLEKANAMTSQTQGLLKSSTDNTSAELHVLGRGLEEAQSEIQALRGSLQSSNDLGSRTQNFLQHSMDNISAEIQAMRDGMQRAGEEMTSLKKDLETLTAQIQNANGHLEQTDTQIQGLKAQLKSTSSLNSQIEVVNGKLKDSSRELQTLRRDLSDVSALKSNVQMLQSNLQKAKAEVQSLKTGLEATKTLAAKIQGQQSDLEALQKAVAAHTQGQKTQNQVLQLIMQDWKYFNGKFYYFSRDKKSWHEAENFCVSQGAHLASVTSQEEQAFLVQITNAVDHWIGLTDQGTEGNWRWVDGTPFDYVQSRRFWRKGQPDNWRHGNGEREDCVHLQRMWNDMACGTAYNWVCKKSTDWSVARTDQS</sequence>
<name>CLC4F_RAT</name>
<keyword id="KW-0903">Direct protein sequencing</keyword>
<keyword id="KW-1015">Disulfide bond</keyword>
<keyword id="KW-0254">Endocytosis</keyword>
<keyword id="KW-0325">Glycoprotein</keyword>
<keyword id="KW-0430">Lectin</keyword>
<keyword id="KW-0472">Membrane</keyword>
<keyword id="KW-0675">Receptor</keyword>
<keyword id="KW-1185">Reference proteome</keyword>
<keyword id="KW-0735">Signal-anchor</keyword>
<keyword id="KW-0812">Transmembrane</keyword>
<keyword id="KW-1133">Transmembrane helix</keyword>
<dbReference type="EMBL" id="J03734">
    <property type="protein sequence ID" value="AAA41472.1"/>
    <property type="molecule type" value="mRNA"/>
</dbReference>
<dbReference type="EMBL" id="M55532">
    <property type="protein sequence ID" value="AAA40892.1"/>
    <property type="molecule type" value="Genomic_DNA"/>
</dbReference>
<dbReference type="EMBL" id="BC098661">
    <property type="protein sequence ID" value="AAH98661.1"/>
    <property type="molecule type" value="mRNA"/>
</dbReference>
<dbReference type="PIR" id="A38674">
    <property type="entry name" value="A28166"/>
</dbReference>
<dbReference type="RefSeq" id="NP_446205.1">
    <property type="nucleotide sequence ID" value="NM_053753.1"/>
</dbReference>
<dbReference type="SMR" id="P10716"/>
<dbReference type="FunCoup" id="P10716">
    <property type="interactions" value="1"/>
</dbReference>
<dbReference type="STRING" id="10116.ENSRNOP00000017643"/>
<dbReference type="GlyCosmos" id="P10716">
    <property type="glycosylation" value="6 sites, No reported glycans"/>
</dbReference>
<dbReference type="GlyGen" id="P10716">
    <property type="glycosylation" value="6 sites"/>
</dbReference>
<dbReference type="PhosphoSitePlus" id="P10716"/>
<dbReference type="PaxDb" id="10116-ENSRNOP00000017643"/>
<dbReference type="Ensembl" id="ENSRNOT00000017643.5">
    <property type="protein sequence ID" value="ENSRNOP00000017643.2"/>
    <property type="gene ID" value="ENSRNOG00000013137.5"/>
</dbReference>
<dbReference type="GeneID" id="114598"/>
<dbReference type="KEGG" id="rno:114598"/>
<dbReference type="UCSC" id="RGD:621062">
    <property type="organism name" value="rat"/>
</dbReference>
<dbReference type="AGR" id="RGD:621062"/>
<dbReference type="CTD" id="165530"/>
<dbReference type="RGD" id="621062">
    <property type="gene designation" value="Clec4f"/>
</dbReference>
<dbReference type="eggNOG" id="KOG4297">
    <property type="taxonomic scope" value="Eukaryota"/>
</dbReference>
<dbReference type="GeneTree" id="ENSGT01030000234575"/>
<dbReference type="HOGENOM" id="CLU_030099_1_0_1"/>
<dbReference type="InParanoid" id="P10716"/>
<dbReference type="OMA" id="LSFQTQM"/>
<dbReference type="OrthoDB" id="2142683at2759"/>
<dbReference type="PhylomeDB" id="P10716"/>
<dbReference type="TreeFam" id="TF333341"/>
<dbReference type="PRO" id="PR:P10716"/>
<dbReference type="Proteomes" id="UP000002494">
    <property type="component" value="Chromosome 4"/>
</dbReference>
<dbReference type="Bgee" id="ENSRNOG00000013137">
    <property type="expression patterns" value="Expressed in liver and 3 other cell types or tissues"/>
</dbReference>
<dbReference type="GO" id="GO:0009897">
    <property type="term" value="C:external side of plasma membrane"/>
    <property type="evidence" value="ECO:0000318"/>
    <property type="project" value="GO_Central"/>
</dbReference>
<dbReference type="GO" id="GO:0005886">
    <property type="term" value="C:plasma membrane"/>
    <property type="evidence" value="ECO:0000266"/>
    <property type="project" value="RGD"/>
</dbReference>
<dbReference type="GO" id="GO:0030246">
    <property type="term" value="F:carbohydrate binding"/>
    <property type="evidence" value="ECO:0000318"/>
    <property type="project" value="GO_Central"/>
</dbReference>
<dbReference type="GO" id="GO:0005534">
    <property type="term" value="F:galactose binding"/>
    <property type="evidence" value="ECO:0000266"/>
    <property type="project" value="RGD"/>
</dbReference>
<dbReference type="GO" id="GO:0051861">
    <property type="term" value="F:glycolipid binding"/>
    <property type="evidence" value="ECO:0000266"/>
    <property type="project" value="RGD"/>
</dbReference>
<dbReference type="GO" id="GO:0038187">
    <property type="term" value="F:pattern recognition receptor activity"/>
    <property type="evidence" value="ECO:0000318"/>
    <property type="project" value="GO_Central"/>
</dbReference>
<dbReference type="GO" id="GO:0006897">
    <property type="term" value="P:endocytosis"/>
    <property type="evidence" value="ECO:0007669"/>
    <property type="project" value="UniProtKB-KW"/>
</dbReference>
<dbReference type="GO" id="GO:0006955">
    <property type="term" value="P:immune response"/>
    <property type="evidence" value="ECO:0000318"/>
    <property type="project" value="GO_Central"/>
</dbReference>
<dbReference type="GO" id="GO:0051132">
    <property type="term" value="P:NK T cell activation"/>
    <property type="evidence" value="ECO:0000266"/>
    <property type="project" value="RGD"/>
</dbReference>
<dbReference type="GO" id="GO:0010628">
    <property type="term" value="P:positive regulation of gene expression"/>
    <property type="evidence" value="ECO:0007001"/>
    <property type="project" value="RGD"/>
</dbReference>
<dbReference type="CDD" id="cd03590">
    <property type="entry name" value="CLECT_DC-SIGN_like"/>
    <property type="match status" value="1"/>
</dbReference>
<dbReference type="FunFam" id="1.20.5.170:FF:000180">
    <property type="entry name" value="C-type lectin domain family 4 member F"/>
    <property type="match status" value="1"/>
</dbReference>
<dbReference type="Gene3D" id="1.20.5.170">
    <property type="match status" value="6"/>
</dbReference>
<dbReference type="Gene3D" id="3.10.100.10">
    <property type="entry name" value="Mannose-Binding Protein A, subunit A"/>
    <property type="match status" value="1"/>
</dbReference>
<dbReference type="InterPro" id="IPR001304">
    <property type="entry name" value="C-type_lectin-like"/>
</dbReference>
<dbReference type="InterPro" id="IPR016186">
    <property type="entry name" value="C-type_lectin-like/link_sf"/>
</dbReference>
<dbReference type="InterPro" id="IPR050111">
    <property type="entry name" value="C-type_lectin/snaclec_domain"/>
</dbReference>
<dbReference type="InterPro" id="IPR018378">
    <property type="entry name" value="C-type_lectin_CS"/>
</dbReference>
<dbReference type="InterPro" id="IPR033989">
    <property type="entry name" value="CD209-like_CTLD"/>
</dbReference>
<dbReference type="InterPro" id="IPR016187">
    <property type="entry name" value="CTDL_fold"/>
</dbReference>
<dbReference type="PANTHER" id="PTHR22803">
    <property type="entry name" value="MANNOSE, PHOSPHOLIPASE, LECTIN RECEPTOR RELATED"/>
    <property type="match status" value="1"/>
</dbReference>
<dbReference type="Pfam" id="PF00059">
    <property type="entry name" value="Lectin_C"/>
    <property type="match status" value="1"/>
</dbReference>
<dbReference type="SMART" id="SM00034">
    <property type="entry name" value="CLECT"/>
    <property type="match status" value="1"/>
</dbReference>
<dbReference type="SUPFAM" id="SSF56436">
    <property type="entry name" value="C-type lectin-like"/>
    <property type="match status" value="1"/>
</dbReference>
<dbReference type="SUPFAM" id="SSF57997">
    <property type="entry name" value="Tropomyosin"/>
    <property type="match status" value="1"/>
</dbReference>
<dbReference type="PROSITE" id="PS00615">
    <property type="entry name" value="C_TYPE_LECTIN_1"/>
    <property type="match status" value="1"/>
</dbReference>
<dbReference type="PROSITE" id="PS50041">
    <property type="entry name" value="C_TYPE_LECTIN_2"/>
    <property type="match status" value="1"/>
</dbReference>
<organism>
    <name type="scientific">Rattus norvegicus</name>
    <name type="common">Rat</name>
    <dbReference type="NCBI Taxonomy" id="10116"/>
    <lineage>
        <taxon>Eukaryota</taxon>
        <taxon>Metazoa</taxon>
        <taxon>Chordata</taxon>
        <taxon>Craniata</taxon>
        <taxon>Vertebrata</taxon>
        <taxon>Euteleostomi</taxon>
        <taxon>Mammalia</taxon>
        <taxon>Eutheria</taxon>
        <taxon>Euarchontoglires</taxon>
        <taxon>Glires</taxon>
        <taxon>Rodentia</taxon>
        <taxon>Myomorpha</taxon>
        <taxon>Muroidea</taxon>
        <taxon>Muridae</taxon>
        <taxon>Murinae</taxon>
        <taxon>Rattus</taxon>
    </lineage>
</organism>
<accession>P10716</accession>
<accession>Q4KMB0</accession>
<proteinExistence type="evidence at protein level"/>
<gene>
    <name type="primary">Clec4f</name>
    <name type="synonym">Clecsf13</name>
    <name type="synonym">Kclr</name>
</gene>
<evidence type="ECO:0000255" key="1"/>
<evidence type="ECO:0000255" key="2">
    <source>
        <dbReference type="PROSITE-ProRule" id="PRU00040"/>
    </source>
</evidence>
<protein>
    <recommendedName>
        <fullName>C-type lectin domain family 4 member F</fullName>
    </recommendedName>
    <alternativeName>
        <fullName>C-type lectin superfamily member 13</fullName>
        <shortName>C-type lectin 13</shortName>
    </alternativeName>
    <alternativeName>
        <fullName>Kupffer cell receptor</fullName>
    </alternativeName>
</protein>
<reference key="1">
    <citation type="journal article" date="1988" name="J. Biol. Chem.">
        <title>Molecular cloning and sequencing of a cDNA for a carbohydrate binding receptor unique to rat Kupffer cells.</title>
        <authorList>
            <person name="Hoyle G.W."/>
            <person name="Hill R.L."/>
        </authorList>
    </citation>
    <scope>NUCLEOTIDE SEQUENCE [MRNA]</scope>
    <scope>PROTEIN SEQUENCE OF 83-104</scope>
</reference>
<reference key="2">
    <citation type="journal article" date="1991" name="J. Biol. Chem.">
        <title>Structure of the gene for a carbohydrate-binding receptor unique to rat Kupffer cells.</title>
        <authorList>
            <person name="Hoyle G.W."/>
            <person name="Hill R.L."/>
        </authorList>
    </citation>
    <scope>NUCLEOTIDE SEQUENCE [GENOMIC DNA]</scope>
</reference>
<reference key="3">
    <citation type="journal article" date="2004" name="Genome Res.">
        <title>The status, quality, and expansion of the NIH full-length cDNA project: the Mammalian Gene Collection (MGC).</title>
        <authorList>
            <consortium name="The MGC Project Team"/>
        </authorList>
    </citation>
    <scope>NUCLEOTIDE SEQUENCE [LARGE SCALE MRNA]</scope>
    <source>
        <tissue>Thymus</tissue>
    </source>
</reference>